<name>GLMM_STRP1</name>
<dbReference type="EC" id="5.4.2.10" evidence="1"/>
<dbReference type="EMBL" id="AE004092">
    <property type="protein sequence ID" value="AAK33930.1"/>
    <property type="molecule type" value="Genomic_DNA"/>
</dbReference>
<dbReference type="EMBL" id="CP000017">
    <property type="protein sequence ID" value="AAZ51381.1"/>
    <property type="molecule type" value="Genomic_DNA"/>
</dbReference>
<dbReference type="RefSeq" id="NP_269209.1">
    <property type="nucleotide sequence ID" value="NC_002737.2"/>
</dbReference>
<dbReference type="SMR" id="Q99ZW8"/>
<dbReference type="PaxDb" id="1314-HKU360_00828"/>
<dbReference type="KEGG" id="spy:SPy_1038"/>
<dbReference type="KEGG" id="spz:M5005_Spy0763"/>
<dbReference type="PATRIC" id="fig|160490.10.peg.896"/>
<dbReference type="HOGENOM" id="CLU_016950_7_0_9"/>
<dbReference type="OMA" id="SHNAMPD"/>
<dbReference type="Proteomes" id="UP000000750">
    <property type="component" value="Chromosome"/>
</dbReference>
<dbReference type="GO" id="GO:0005829">
    <property type="term" value="C:cytosol"/>
    <property type="evidence" value="ECO:0007669"/>
    <property type="project" value="TreeGrafter"/>
</dbReference>
<dbReference type="GO" id="GO:0000287">
    <property type="term" value="F:magnesium ion binding"/>
    <property type="evidence" value="ECO:0007669"/>
    <property type="project" value="UniProtKB-UniRule"/>
</dbReference>
<dbReference type="GO" id="GO:0008966">
    <property type="term" value="F:phosphoglucosamine mutase activity"/>
    <property type="evidence" value="ECO:0007669"/>
    <property type="project" value="UniProtKB-UniRule"/>
</dbReference>
<dbReference type="GO" id="GO:0004615">
    <property type="term" value="F:phosphomannomutase activity"/>
    <property type="evidence" value="ECO:0007669"/>
    <property type="project" value="TreeGrafter"/>
</dbReference>
<dbReference type="GO" id="GO:0005975">
    <property type="term" value="P:carbohydrate metabolic process"/>
    <property type="evidence" value="ECO:0007669"/>
    <property type="project" value="InterPro"/>
</dbReference>
<dbReference type="GO" id="GO:0009252">
    <property type="term" value="P:peptidoglycan biosynthetic process"/>
    <property type="evidence" value="ECO:0007669"/>
    <property type="project" value="TreeGrafter"/>
</dbReference>
<dbReference type="GO" id="GO:0006048">
    <property type="term" value="P:UDP-N-acetylglucosamine biosynthetic process"/>
    <property type="evidence" value="ECO:0007669"/>
    <property type="project" value="TreeGrafter"/>
</dbReference>
<dbReference type="CDD" id="cd05802">
    <property type="entry name" value="GlmM"/>
    <property type="match status" value="1"/>
</dbReference>
<dbReference type="FunFam" id="3.30.310.50:FF:000001">
    <property type="entry name" value="Phosphoglucosamine mutase"/>
    <property type="match status" value="1"/>
</dbReference>
<dbReference type="FunFam" id="3.40.120.10:FF:000001">
    <property type="entry name" value="Phosphoglucosamine mutase"/>
    <property type="match status" value="1"/>
</dbReference>
<dbReference type="FunFam" id="3.40.120.10:FF:000002">
    <property type="entry name" value="Phosphoglucosamine mutase"/>
    <property type="match status" value="1"/>
</dbReference>
<dbReference type="Gene3D" id="3.40.120.10">
    <property type="entry name" value="Alpha-D-Glucose-1,6-Bisphosphate, subunit A, domain 3"/>
    <property type="match status" value="3"/>
</dbReference>
<dbReference type="Gene3D" id="3.30.310.50">
    <property type="entry name" value="Alpha-D-phosphohexomutase, C-terminal domain"/>
    <property type="match status" value="1"/>
</dbReference>
<dbReference type="HAMAP" id="MF_01554_B">
    <property type="entry name" value="GlmM_B"/>
    <property type="match status" value="1"/>
</dbReference>
<dbReference type="InterPro" id="IPR005844">
    <property type="entry name" value="A-D-PHexomutase_a/b/a-I"/>
</dbReference>
<dbReference type="InterPro" id="IPR016055">
    <property type="entry name" value="A-D-PHexomutase_a/b/a-I/II/III"/>
</dbReference>
<dbReference type="InterPro" id="IPR005845">
    <property type="entry name" value="A-D-PHexomutase_a/b/a-II"/>
</dbReference>
<dbReference type="InterPro" id="IPR005846">
    <property type="entry name" value="A-D-PHexomutase_a/b/a-III"/>
</dbReference>
<dbReference type="InterPro" id="IPR005843">
    <property type="entry name" value="A-D-PHexomutase_C"/>
</dbReference>
<dbReference type="InterPro" id="IPR036900">
    <property type="entry name" value="A-D-PHexomutase_C_sf"/>
</dbReference>
<dbReference type="InterPro" id="IPR016066">
    <property type="entry name" value="A-D-PHexomutase_CS"/>
</dbReference>
<dbReference type="InterPro" id="IPR005841">
    <property type="entry name" value="Alpha-D-phosphohexomutase_SF"/>
</dbReference>
<dbReference type="InterPro" id="IPR006352">
    <property type="entry name" value="GlmM_bact"/>
</dbReference>
<dbReference type="InterPro" id="IPR050060">
    <property type="entry name" value="Phosphoglucosamine_mutase"/>
</dbReference>
<dbReference type="NCBIfam" id="TIGR01455">
    <property type="entry name" value="glmM"/>
    <property type="match status" value="1"/>
</dbReference>
<dbReference type="PANTHER" id="PTHR42946:SF1">
    <property type="entry name" value="PHOSPHOGLUCOMUTASE (ALPHA-D-GLUCOSE-1,6-BISPHOSPHATE-DEPENDENT)"/>
    <property type="match status" value="1"/>
</dbReference>
<dbReference type="PANTHER" id="PTHR42946">
    <property type="entry name" value="PHOSPHOHEXOSE MUTASE"/>
    <property type="match status" value="1"/>
</dbReference>
<dbReference type="Pfam" id="PF02878">
    <property type="entry name" value="PGM_PMM_I"/>
    <property type="match status" value="1"/>
</dbReference>
<dbReference type="Pfam" id="PF02879">
    <property type="entry name" value="PGM_PMM_II"/>
    <property type="match status" value="1"/>
</dbReference>
<dbReference type="Pfam" id="PF02880">
    <property type="entry name" value="PGM_PMM_III"/>
    <property type="match status" value="1"/>
</dbReference>
<dbReference type="Pfam" id="PF00408">
    <property type="entry name" value="PGM_PMM_IV"/>
    <property type="match status" value="1"/>
</dbReference>
<dbReference type="PRINTS" id="PR00509">
    <property type="entry name" value="PGMPMM"/>
</dbReference>
<dbReference type="SUPFAM" id="SSF55957">
    <property type="entry name" value="Phosphoglucomutase, C-terminal domain"/>
    <property type="match status" value="1"/>
</dbReference>
<dbReference type="SUPFAM" id="SSF53738">
    <property type="entry name" value="Phosphoglucomutase, first 3 domains"/>
    <property type="match status" value="3"/>
</dbReference>
<dbReference type="PROSITE" id="PS00710">
    <property type="entry name" value="PGM_PMM"/>
    <property type="match status" value="1"/>
</dbReference>
<gene>
    <name evidence="1" type="primary">glmM</name>
    <name type="ordered locus">SPy_1038</name>
    <name type="ordered locus">M5005_Spy0763</name>
</gene>
<feature type="chain" id="PRO_0000147975" description="Phosphoglucosamine mutase">
    <location>
        <begin position="1"/>
        <end position="451"/>
    </location>
</feature>
<feature type="active site" description="Phosphoserine intermediate" evidence="1">
    <location>
        <position position="101"/>
    </location>
</feature>
<feature type="binding site" description="via phosphate group" evidence="1">
    <location>
        <position position="101"/>
    </location>
    <ligand>
        <name>Mg(2+)</name>
        <dbReference type="ChEBI" id="CHEBI:18420"/>
    </ligand>
</feature>
<feature type="binding site" evidence="1">
    <location>
        <position position="240"/>
    </location>
    <ligand>
        <name>Mg(2+)</name>
        <dbReference type="ChEBI" id="CHEBI:18420"/>
    </ligand>
</feature>
<feature type="binding site" evidence="1">
    <location>
        <position position="242"/>
    </location>
    <ligand>
        <name>Mg(2+)</name>
        <dbReference type="ChEBI" id="CHEBI:18420"/>
    </ligand>
</feature>
<feature type="binding site" evidence="1">
    <location>
        <position position="244"/>
    </location>
    <ligand>
        <name>Mg(2+)</name>
        <dbReference type="ChEBI" id="CHEBI:18420"/>
    </ligand>
</feature>
<feature type="modified residue" description="Phosphoserine" evidence="1">
    <location>
        <position position="101"/>
    </location>
</feature>
<feature type="sequence conflict" description="In Ref. 2; AAZ51381." evidence="2" ref="2">
    <original>E</original>
    <variation>D</variation>
    <location>
        <position position="313"/>
    </location>
</feature>
<reference key="1">
    <citation type="journal article" date="2001" name="Proc. Natl. Acad. Sci. U.S.A.">
        <title>Complete genome sequence of an M1 strain of Streptococcus pyogenes.</title>
        <authorList>
            <person name="Ferretti J.J."/>
            <person name="McShan W.M."/>
            <person name="Ajdic D.J."/>
            <person name="Savic D.J."/>
            <person name="Savic G."/>
            <person name="Lyon K."/>
            <person name="Primeaux C."/>
            <person name="Sezate S."/>
            <person name="Suvorov A.N."/>
            <person name="Kenton S."/>
            <person name="Lai H.S."/>
            <person name="Lin S.P."/>
            <person name="Qian Y."/>
            <person name="Jia H.G."/>
            <person name="Najar F.Z."/>
            <person name="Ren Q."/>
            <person name="Zhu H."/>
            <person name="Song L."/>
            <person name="White J."/>
            <person name="Yuan X."/>
            <person name="Clifton S.W."/>
            <person name="Roe B.A."/>
            <person name="McLaughlin R.E."/>
        </authorList>
    </citation>
    <scope>NUCLEOTIDE SEQUENCE [LARGE SCALE GENOMIC DNA]</scope>
    <source>
        <strain>ATCC 700294 / SF370 / Serotype M1</strain>
    </source>
</reference>
<reference key="2">
    <citation type="journal article" date="2005" name="J. Infect. Dis.">
        <title>Evolutionary origin and emergence of a highly successful clone of serotype M1 group A Streptococcus involved multiple horizontal gene transfer events.</title>
        <authorList>
            <person name="Sumby P."/>
            <person name="Porcella S.F."/>
            <person name="Madrigal A.G."/>
            <person name="Barbian K.D."/>
            <person name="Virtaneva K."/>
            <person name="Ricklefs S.M."/>
            <person name="Sturdevant D.E."/>
            <person name="Graham M.R."/>
            <person name="Vuopio-Varkila J."/>
            <person name="Hoe N.P."/>
            <person name="Musser J.M."/>
        </authorList>
    </citation>
    <scope>NUCLEOTIDE SEQUENCE [LARGE SCALE GENOMIC DNA]</scope>
    <source>
        <strain>ATCC BAA-947 / MGAS5005 / Serotype M1</strain>
    </source>
</reference>
<sequence length="451" mass="48414">MGKYFGTDGVRGEANVELTPELAFKLGRFGGYVLSQHETERPKVFVARDTRISGEMLESALIAGLLSVGIEVYKLGVLATPGVSYLVRTEKASAGVMISASHNPALDNGIKFFGNDGFKLADDQELEIEALLDAPEDTLPRPSAEGLGTLVDYPEGLRKYEKFLVTTGTDLSGMTVALDTANGAASVSARDVFLDLNAEIAVIGEKPNGLNINDGVGSTRPEQLQELVKETGADLGLAFDGDSDRLIAVDETGEIVDGDRIMFIIGKYLSEKGLLAHNTIVTTVMSNLGFHKALDKQGINKAITAVGDRYVVEEMRSSGYNLGGEQSGHVIIMDYNTTGDGQLTAIQLAKVMKETGKSLSELAAEVTIYPQKLVNIRVENSMKERAMEVPAIANIIAKMEDEMAGNGRILVRPSGTEPLLRVMAEAPTDAEVDYYVDTIADVVRTEIGCDN</sequence>
<accession>Q99ZW8</accession>
<accession>Q48Z37</accession>
<proteinExistence type="inferred from homology"/>
<keyword id="KW-0413">Isomerase</keyword>
<keyword id="KW-0460">Magnesium</keyword>
<keyword id="KW-0479">Metal-binding</keyword>
<keyword id="KW-0597">Phosphoprotein</keyword>
<keyword id="KW-1185">Reference proteome</keyword>
<protein>
    <recommendedName>
        <fullName evidence="1">Phosphoglucosamine mutase</fullName>
        <ecNumber evidence="1">5.4.2.10</ecNumber>
    </recommendedName>
</protein>
<organism>
    <name type="scientific">Streptococcus pyogenes serotype M1</name>
    <dbReference type="NCBI Taxonomy" id="301447"/>
    <lineage>
        <taxon>Bacteria</taxon>
        <taxon>Bacillati</taxon>
        <taxon>Bacillota</taxon>
        <taxon>Bacilli</taxon>
        <taxon>Lactobacillales</taxon>
        <taxon>Streptococcaceae</taxon>
        <taxon>Streptococcus</taxon>
    </lineage>
</organism>
<evidence type="ECO:0000255" key="1">
    <source>
        <dbReference type="HAMAP-Rule" id="MF_01554"/>
    </source>
</evidence>
<evidence type="ECO:0000305" key="2"/>
<comment type="function">
    <text evidence="1">Catalyzes the conversion of glucosamine-6-phosphate to glucosamine-1-phosphate.</text>
</comment>
<comment type="catalytic activity">
    <reaction evidence="1">
        <text>alpha-D-glucosamine 1-phosphate = D-glucosamine 6-phosphate</text>
        <dbReference type="Rhea" id="RHEA:23424"/>
        <dbReference type="ChEBI" id="CHEBI:58516"/>
        <dbReference type="ChEBI" id="CHEBI:58725"/>
        <dbReference type="EC" id="5.4.2.10"/>
    </reaction>
</comment>
<comment type="cofactor">
    <cofactor evidence="1">
        <name>Mg(2+)</name>
        <dbReference type="ChEBI" id="CHEBI:18420"/>
    </cofactor>
    <text evidence="1">Binds 1 Mg(2+) ion per subunit.</text>
</comment>
<comment type="PTM">
    <text evidence="1">Activated by phosphorylation.</text>
</comment>
<comment type="similarity">
    <text evidence="1">Belongs to the phosphohexose mutase family.</text>
</comment>